<organism>
    <name type="scientific">Pelotomaculum thermopropionicum (strain DSM 13744 / JCM 10971 / SI)</name>
    <dbReference type="NCBI Taxonomy" id="370438"/>
    <lineage>
        <taxon>Bacteria</taxon>
        <taxon>Bacillati</taxon>
        <taxon>Bacillota</taxon>
        <taxon>Clostridia</taxon>
        <taxon>Eubacteriales</taxon>
        <taxon>Desulfotomaculaceae</taxon>
        <taxon>Pelotomaculum</taxon>
    </lineage>
</organism>
<feature type="chain" id="PRO_1000073798" description="Adenine phosphoribosyltransferase">
    <location>
        <begin position="1"/>
        <end position="171"/>
    </location>
</feature>
<sequence length="171" mass="18765">MDLKKKIREVPDFPREGINYKDISTLLLDGEAYRQAVQELARQCRYKAADLIVCPKLRGLVIGAPLSYILGTGLAVLQRPVRLPGDALSWQGMALGEDSFYLSREAVKPEMKVLVADELLATGGTAFTAIKMIEELGGEVVGTVFLIELTGLGGRAKLNDYDTISLVQYNF</sequence>
<name>APT_PELTS</name>
<proteinExistence type="inferred from homology"/>
<keyword id="KW-0963">Cytoplasm</keyword>
<keyword id="KW-0328">Glycosyltransferase</keyword>
<keyword id="KW-0660">Purine salvage</keyword>
<keyword id="KW-1185">Reference proteome</keyword>
<keyword id="KW-0808">Transferase</keyword>
<protein>
    <recommendedName>
        <fullName evidence="1">Adenine phosphoribosyltransferase</fullName>
        <shortName evidence="1">APRT</shortName>
        <ecNumber evidence="1">2.4.2.7</ecNumber>
    </recommendedName>
</protein>
<dbReference type="EC" id="2.4.2.7" evidence="1"/>
<dbReference type="EMBL" id="AP009389">
    <property type="protein sequence ID" value="BAF59225.1"/>
    <property type="molecule type" value="Genomic_DNA"/>
</dbReference>
<dbReference type="SMR" id="A5D3H8"/>
<dbReference type="STRING" id="370438.PTH_1044"/>
<dbReference type="KEGG" id="pth:PTH_1044"/>
<dbReference type="eggNOG" id="COG0503">
    <property type="taxonomic scope" value="Bacteria"/>
</dbReference>
<dbReference type="HOGENOM" id="CLU_063339_3_0_9"/>
<dbReference type="UniPathway" id="UPA00588">
    <property type="reaction ID" value="UER00646"/>
</dbReference>
<dbReference type="Proteomes" id="UP000006556">
    <property type="component" value="Chromosome"/>
</dbReference>
<dbReference type="GO" id="GO:0005737">
    <property type="term" value="C:cytoplasm"/>
    <property type="evidence" value="ECO:0007669"/>
    <property type="project" value="UniProtKB-SubCell"/>
</dbReference>
<dbReference type="GO" id="GO:0002055">
    <property type="term" value="F:adenine binding"/>
    <property type="evidence" value="ECO:0007669"/>
    <property type="project" value="TreeGrafter"/>
</dbReference>
<dbReference type="GO" id="GO:0003999">
    <property type="term" value="F:adenine phosphoribosyltransferase activity"/>
    <property type="evidence" value="ECO:0007669"/>
    <property type="project" value="UniProtKB-UniRule"/>
</dbReference>
<dbReference type="GO" id="GO:0016208">
    <property type="term" value="F:AMP binding"/>
    <property type="evidence" value="ECO:0007669"/>
    <property type="project" value="TreeGrafter"/>
</dbReference>
<dbReference type="GO" id="GO:0006168">
    <property type="term" value="P:adenine salvage"/>
    <property type="evidence" value="ECO:0007669"/>
    <property type="project" value="InterPro"/>
</dbReference>
<dbReference type="GO" id="GO:0044209">
    <property type="term" value="P:AMP salvage"/>
    <property type="evidence" value="ECO:0007669"/>
    <property type="project" value="UniProtKB-UniRule"/>
</dbReference>
<dbReference type="GO" id="GO:0006166">
    <property type="term" value="P:purine ribonucleoside salvage"/>
    <property type="evidence" value="ECO:0007669"/>
    <property type="project" value="UniProtKB-KW"/>
</dbReference>
<dbReference type="CDD" id="cd06223">
    <property type="entry name" value="PRTases_typeI"/>
    <property type="match status" value="1"/>
</dbReference>
<dbReference type="FunFam" id="3.40.50.2020:FF:000004">
    <property type="entry name" value="Adenine phosphoribosyltransferase"/>
    <property type="match status" value="1"/>
</dbReference>
<dbReference type="Gene3D" id="3.40.50.2020">
    <property type="match status" value="1"/>
</dbReference>
<dbReference type="HAMAP" id="MF_00004">
    <property type="entry name" value="Aden_phosphoribosyltr"/>
    <property type="match status" value="1"/>
</dbReference>
<dbReference type="InterPro" id="IPR005764">
    <property type="entry name" value="Ade_phspho_trans"/>
</dbReference>
<dbReference type="InterPro" id="IPR000836">
    <property type="entry name" value="PRibTrfase_dom"/>
</dbReference>
<dbReference type="InterPro" id="IPR029057">
    <property type="entry name" value="PRTase-like"/>
</dbReference>
<dbReference type="InterPro" id="IPR050054">
    <property type="entry name" value="UPRTase/APRTase"/>
</dbReference>
<dbReference type="NCBIfam" id="NF002636">
    <property type="entry name" value="PRK02304.1-5"/>
    <property type="match status" value="1"/>
</dbReference>
<dbReference type="PANTHER" id="PTHR32315">
    <property type="entry name" value="ADENINE PHOSPHORIBOSYLTRANSFERASE"/>
    <property type="match status" value="1"/>
</dbReference>
<dbReference type="PANTHER" id="PTHR32315:SF3">
    <property type="entry name" value="ADENINE PHOSPHORIBOSYLTRANSFERASE"/>
    <property type="match status" value="1"/>
</dbReference>
<dbReference type="Pfam" id="PF00156">
    <property type="entry name" value="Pribosyltran"/>
    <property type="match status" value="1"/>
</dbReference>
<dbReference type="SUPFAM" id="SSF53271">
    <property type="entry name" value="PRTase-like"/>
    <property type="match status" value="1"/>
</dbReference>
<reference key="1">
    <citation type="journal article" date="2008" name="Genome Res.">
        <title>The genome of Pelotomaculum thermopropionicum reveals niche-associated evolution in anaerobic microbiota.</title>
        <authorList>
            <person name="Kosaka T."/>
            <person name="Kato S."/>
            <person name="Shimoyama T."/>
            <person name="Ishii S."/>
            <person name="Abe T."/>
            <person name="Watanabe K."/>
        </authorList>
    </citation>
    <scope>NUCLEOTIDE SEQUENCE [LARGE SCALE GENOMIC DNA]</scope>
    <source>
        <strain>DSM 13744 / JCM 10971 / SI</strain>
    </source>
</reference>
<gene>
    <name evidence="1" type="primary">apt</name>
    <name type="ordered locus">PTH_1044</name>
</gene>
<evidence type="ECO:0000255" key="1">
    <source>
        <dbReference type="HAMAP-Rule" id="MF_00004"/>
    </source>
</evidence>
<accession>A5D3H8</accession>
<comment type="function">
    <text evidence="1">Catalyzes a salvage reaction resulting in the formation of AMP, that is energically less costly than de novo synthesis.</text>
</comment>
<comment type="catalytic activity">
    <reaction evidence="1">
        <text>AMP + diphosphate = 5-phospho-alpha-D-ribose 1-diphosphate + adenine</text>
        <dbReference type="Rhea" id="RHEA:16609"/>
        <dbReference type="ChEBI" id="CHEBI:16708"/>
        <dbReference type="ChEBI" id="CHEBI:33019"/>
        <dbReference type="ChEBI" id="CHEBI:58017"/>
        <dbReference type="ChEBI" id="CHEBI:456215"/>
        <dbReference type="EC" id="2.4.2.7"/>
    </reaction>
</comment>
<comment type="pathway">
    <text evidence="1">Purine metabolism; AMP biosynthesis via salvage pathway; AMP from adenine: step 1/1.</text>
</comment>
<comment type="subunit">
    <text evidence="1">Homodimer.</text>
</comment>
<comment type="subcellular location">
    <subcellularLocation>
        <location evidence="1">Cytoplasm</location>
    </subcellularLocation>
</comment>
<comment type="similarity">
    <text evidence="1">Belongs to the purine/pyrimidine phosphoribosyltransferase family.</text>
</comment>